<comment type="function">
    <text evidence="1">Catalyzes the reversible conversion of 2-phosphoglycerate (2-PG) into phosphoenolpyruvate (PEP). It is essential for the degradation of carbohydrates via glycolysis.</text>
</comment>
<comment type="catalytic activity">
    <reaction evidence="1">
        <text>(2R)-2-phosphoglycerate = phosphoenolpyruvate + H2O</text>
        <dbReference type="Rhea" id="RHEA:10164"/>
        <dbReference type="ChEBI" id="CHEBI:15377"/>
        <dbReference type="ChEBI" id="CHEBI:58289"/>
        <dbReference type="ChEBI" id="CHEBI:58702"/>
        <dbReference type="EC" id="4.2.1.11"/>
    </reaction>
</comment>
<comment type="cofactor">
    <cofactor evidence="1">
        <name>Mg(2+)</name>
        <dbReference type="ChEBI" id="CHEBI:18420"/>
    </cofactor>
    <text evidence="1">Binds a second Mg(2+) ion via substrate during catalysis.</text>
</comment>
<comment type="pathway">
    <text evidence="1">Carbohydrate degradation; glycolysis; pyruvate from D-glyceraldehyde 3-phosphate: step 4/5.</text>
</comment>
<comment type="subcellular location">
    <subcellularLocation>
        <location evidence="1">Cytoplasm</location>
    </subcellularLocation>
    <subcellularLocation>
        <location evidence="1">Secreted</location>
    </subcellularLocation>
    <subcellularLocation>
        <location evidence="1">Cell surface</location>
    </subcellularLocation>
    <text evidence="1">Fractions of enolase are present in both the cytoplasm and on the cell surface.</text>
</comment>
<comment type="similarity">
    <text evidence="1">Belongs to the enolase family.</text>
</comment>
<organism>
    <name type="scientific">Borreliella burgdorferi (strain ZS7)</name>
    <name type="common">Borrelia burgdorferi</name>
    <dbReference type="NCBI Taxonomy" id="445985"/>
    <lineage>
        <taxon>Bacteria</taxon>
        <taxon>Pseudomonadati</taxon>
        <taxon>Spirochaetota</taxon>
        <taxon>Spirochaetia</taxon>
        <taxon>Spirochaetales</taxon>
        <taxon>Borreliaceae</taxon>
        <taxon>Borreliella</taxon>
    </lineage>
</organism>
<name>ENO_BORBZ</name>
<gene>
    <name evidence="1" type="primary">eno</name>
    <name type="ordered locus">BbuZS7_0341</name>
</gene>
<sequence>MGFHIYEIKARQIIDSRGNPTVEADVILEDGTYGRAAVPSGASTGINEAVELRDGDKSVYMGKGVLKAIENIKNIIAPELEGMSALNQVAIDRKMLELDGTPTKEKLGANAILAVSMATAKAAAKYLGLRPYQYLGAYKANILPTPMCNIINGGAHSDNSVDFQEFMIMPIGAKTFSEAIRMAAEVFHTLKGILSGKGYATSVGDEGGFAPNLKSNEEACEVIIEAIKKAGYEPGKDIAIALDPATSELYDPKTKKYVLKWSTKEELTSEQMVEYWAKWVEKYPIISIEDGMAEEDWDGWKKLTDKIGNKIQLVGDDLFVTNTSFLKKGIEMGVANSILIKVNQIGTLTETFEAVEMAKKAGYTAIVSHRSGETEDTTIADLVVALGTGQIKTGSLSRTDRIAKYNQLIRIEEELETTAEYHGKSVFYSIKQK</sequence>
<protein>
    <recommendedName>
        <fullName evidence="1">Enolase</fullName>
        <ecNumber evidence="1">4.2.1.11</ecNumber>
    </recommendedName>
    <alternativeName>
        <fullName evidence="1">2-phospho-D-glycerate hydro-lyase</fullName>
    </alternativeName>
    <alternativeName>
        <fullName evidence="1">2-phosphoglycerate dehydratase</fullName>
    </alternativeName>
</protein>
<reference key="1">
    <citation type="journal article" date="2011" name="J. Bacteriol.">
        <title>Whole-genome sequences of thirteen isolates of Borrelia burgdorferi.</title>
        <authorList>
            <person name="Schutzer S.E."/>
            <person name="Fraser-Liggett C.M."/>
            <person name="Casjens S.R."/>
            <person name="Qiu W.G."/>
            <person name="Dunn J.J."/>
            <person name="Mongodin E.F."/>
            <person name="Luft B.J."/>
        </authorList>
    </citation>
    <scope>NUCLEOTIDE SEQUENCE [LARGE SCALE GENOMIC DNA]</scope>
    <source>
        <strain>ZS7</strain>
    </source>
</reference>
<evidence type="ECO:0000255" key="1">
    <source>
        <dbReference type="HAMAP-Rule" id="MF_00318"/>
    </source>
</evidence>
<feature type="chain" id="PRO_1000119567" description="Enolase">
    <location>
        <begin position="1"/>
        <end position="433"/>
    </location>
</feature>
<feature type="active site" description="Proton donor" evidence="1">
    <location>
        <position position="206"/>
    </location>
</feature>
<feature type="active site" description="Proton acceptor" evidence="1">
    <location>
        <position position="341"/>
    </location>
</feature>
<feature type="binding site" evidence="1">
    <location>
        <position position="164"/>
    </location>
    <ligand>
        <name>(2R)-2-phosphoglycerate</name>
        <dbReference type="ChEBI" id="CHEBI:58289"/>
    </ligand>
</feature>
<feature type="binding site" evidence="1">
    <location>
        <position position="243"/>
    </location>
    <ligand>
        <name>Mg(2+)</name>
        <dbReference type="ChEBI" id="CHEBI:18420"/>
    </ligand>
</feature>
<feature type="binding site" evidence="1">
    <location>
        <position position="289"/>
    </location>
    <ligand>
        <name>Mg(2+)</name>
        <dbReference type="ChEBI" id="CHEBI:18420"/>
    </ligand>
</feature>
<feature type="binding site" evidence="1">
    <location>
        <position position="316"/>
    </location>
    <ligand>
        <name>Mg(2+)</name>
        <dbReference type="ChEBI" id="CHEBI:18420"/>
    </ligand>
</feature>
<feature type="binding site" evidence="1">
    <location>
        <position position="341"/>
    </location>
    <ligand>
        <name>(2R)-2-phosphoglycerate</name>
        <dbReference type="ChEBI" id="CHEBI:58289"/>
    </ligand>
</feature>
<feature type="binding site" evidence="1">
    <location>
        <position position="370"/>
    </location>
    <ligand>
        <name>(2R)-2-phosphoglycerate</name>
        <dbReference type="ChEBI" id="CHEBI:58289"/>
    </ligand>
</feature>
<feature type="binding site" evidence="1">
    <location>
        <position position="371"/>
    </location>
    <ligand>
        <name>(2R)-2-phosphoglycerate</name>
        <dbReference type="ChEBI" id="CHEBI:58289"/>
    </ligand>
</feature>
<feature type="binding site" evidence="1">
    <location>
        <position position="392"/>
    </location>
    <ligand>
        <name>(2R)-2-phosphoglycerate</name>
        <dbReference type="ChEBI" id="CHEBI:58289"/>
    </ligand>
</feature>
<proteinExistence type="inferred from homology"/>
<dbReference type="EC" id="4.2.1.11" evidence="1"/>
<dbReference type="EMBL" id="CP001205">
    <property type="protein sequence ID" value="ACK74888.1"/>
    <property type="molecule type" value="Genomic_DNA"/>
</dbReference>
<dbReference type="RefSeq" id="WP_002657783.1">
    <property type="nucleotide sequence ID" value="NC_011728.1"/>
</dbReference>
<dbReference type="SMR" id="B7J1R2"/>
<dbReference type="MoonProt" id="B7J1R2"/>
<dbReference type="GeneID" id="56567766"/>
<dbReference type="KEGG" id="bbz:BbuZS7_0341"/>
<dbReference type="HOGENOM" id="CLU_031223_2_1_12"/>
<dbReference type="UniPathway" id="UPA00109">
    <property type="reaction ID" value="UER00187"/>
</dbReference>
<dbReference type="Proteomes" id="UP000006901">
    <property type="component" value="Chromosome"/>
</dbReference>
<dbReference type="GO" id="GO:0009986">
    <property type="term" value="C:cell surface"/>
    <property type="evidence" value="ECO:0007669"/>
    <property type="project" value="UniProtKB-SubCell"/>
</dbReference>
<dbReference type="GO" id="GO:0005576">
    <property type="term" value="C:extracellular region"/>
    <property type="evidence" value="ECO:0007669"/>
    <property type="project" value="UniProtKB-SubCell"/>
</dbReference>
<dbReference type="GO" id="GO:0000015">
    <property type="term" value="C:phosphopyruvate hydratase complex"/>
    <property type="evidence" value="ECO:0007669"/>
    <property type="project" value="InterPro"/>
</dbReference>
<dbReference type="GO" id="GO:0000287">
    <property type="term" value="F:magnesium ion binding"/>
    <property type="evidence" value="ECO:0007669"/>
    <property type="project" value="UniProtKB-UniRule"/>
</dbReference>
<dbReference type="GO" id="GO:0004634">
    <property type="term" value="F:phosphopyruvate hydratase activity"/>
    <property type="evidence" value="ECO:0007669"/>
    <property type="project" value="UniProtKB-UniRule"/>
</dbReference>
<dbReference type="GO" id="GO:0006096">
    <property type="term" value="P:glycolytic process"/>
    <property type="evidence" value="ECO:0007669"/>
    <property type="project" value="UniProtKB-UniRule"/>
</dbReference>
<dbReference type="CDD" id="cd03313">
    <property type="entry name" value="enolase"/>
    <property type="match status" value="1"/>
</dbReference>
<dbReference type="FunFam" id="3.20.20.120:FF:000001">
    <property type="entry name" value="Enolase"/>
    <property type="match status" value="1"/>
</dbReference>
<dbReference type="FunFam" id="3.30.390.10:FF:000001">
    <property type="entry name" value="Enolase"/>
    <property type="match status" value="1"/>
</dbReference>
<dbReference type="Gene3D" id="3.20.20.120">
    <property type="entry name" value="Enolase-like C-terminal domain"/>
    <property type="match status" value="1"/>
</dbReference>
<dbReference type="Gene3D" id="3.30.390.10">
    <property type="entry name" value="Enolase-like, N-terminal domain"/>
    <property type="match status" value="1"/>
</dbReference>
<dbReference type="HAMAP" id="MF_00318">
    <property type="entry name" value="Enolase"/>
    <property type="match status" value="1"/>
</dbReference>
<dbReference type="InterPro" id="IPR000941">
    <property type="entry name" value="Enolase"/>
</dbReference>
<dbReference type="InterPro" id="IPR036849">
    <property type="entry name" value="Enolase-like_C_sf"/>
</dbReference>
<dbReference type="InterPro" id="IPR029017">
    <property type="entry name" value="Enolase-like_N"/>
</dbReference>
<dbReference type="InterPro" id="IPR020810">
    <property type="entry name" value="Enolase_C"/>
</dbReference>
<dbReference type="InterPro" id="IPR020809">
    <property type="entry name" value="Enolase_CS"/>
</dbReference>
<dbReference type="InterPro" id="IPR020811">
    <property type="entry name" value="Enolase_N"/>
</dbReference>
<dbReference type="NCBIfam" id="TIGR01060">
    <property type="entry name" value="eno"/>
    <property type="match status" value="1"/>
</dbReference>
<dbReference type="PANTHER" id="PTHR11902">
    <property type="entry name" value="ENOLASE"/>
    <property type="match status" value="1"/>
</dbReference>
<dbReference type="PANTHER" id="PTHR11902:SF1">
    <property type="entry name" value="ENOLASE"/>
    <property type="match status" value="1"/>
</dbReference>
<dbReference type="Pfam" id="PF00113">
    <property type="entry name" value="Enolase_C"/>
    <property type="match status" value="1"/>
</dbReference>
<dbReference type="Pfam" id="PF03952">
    <property type="entry name" value="Enolase_N"/>
    <property type="match status" value="1"/>
</dbReference>
<dbReference type="PIRSF" id="PIRSF001400">
    <property type="entry name" value="Enolase"/>
    <property type="match status" value="1"/>
</dbReference>
<dbReference type="PRINTS" id="PR00148">
    <property type="entry name" value="ENOLASE"/>
</dbReference>
<dbReference type="SFLD" id="SFLDF00002">
    <property type="entry name" value="enolase"/>
    <property type="match status" value="1"/>
</dbReference>
<dbReference type="SFLD" id="SFLDG00178">
    <property type="entry name" value="enolase"/>
    <property type="match status" value="1"/>
</dbReference>
<dbReference type="SMART" id="SM01192">
    <property type="entry name" value="Enolase_C"/>
    <property type="match status" value="1"/>
</dbReference>
<dbReference type="SMART" id="SM01193">
    <property type="entry name" value="Enolase_N"/>
    <property type="match status" value="1"/>
</dbReference>
<dbReference type="SUPFAM" id="SSF51604">
    <property type="entry name" value="Enolase C-terminal domain-like"/>
    <property type="match status" value="1"/>
</dbReference>
<dbReference type="SUPFAM" id="SSF54826">
    <property type="entry name" value="Enolase N-terminal domain-like"/>
    <property type="match status" value="1"/>
</dbReference>
<dbReference type="PROSITE" id="PS00164">
    <property type="entry name" value="ENOLASE"/>
    <property type="match status" value="1"/>
</dbReference>
<keyword id="KW-0963">Cytoplasm</keyword>
<keyword id="KW-0324">Glycolysis</keyword>
<keyword id="KW-0456">Lyase</keyword>
<keyword id="KW-0460">Magnesium</keyword>
<keyword id="KW-0479">Metal-binding</keyword>
<keyword id="KW-0964">Secreted</keyword>
<accession>B7J1R2</accession>